<evidence type="ECO:0000255" key="1">
    <source>
        <dbReference type="HAMAP-Rule" id="MF_01210"/>
    </source>
</evidence>
<comment type="function">
    <text evidence="1">Large subunit of the glutamine-dependent carbamoyl phosphate synthetase (CPSase). CPSase catalyzes the formation of carbamoyl phosphate from the ammonia moiety of glutamine, carbonate, and phosphate donated by ATP, constituting the first step of 2 biosynthetic pathways, one leading to arginine and/or urea and the other to pyrimidine nucleotides. The large subunit (synthetase) binds the substrates ammonia (free or transferred from glutamine from the small subunit), hydrogencarbonate and ATP and carries out an ATP-coupled ligase reaction, activating hydrogencarbonate by forming carboxy phosphate which reacts with ammonia to form carbamoyl phosphate.</text>
</comment>
<comment type="catalytic activity">
    <reaction evidence="1">
        <text>hydrogencarbonate + L-glutamine + 2 ATP + H2O = carbamoyl phosphate + L-glutamate + 2 ADP + phosphate + 2 H(+)</text>
        <dbReference type="Rhea" id="RHEA:18633"/>
        <dbReference type="ChEBI" id="CHEBI:15377"/>
        <dbReference type="ChEBI" id="CHEBI:15378"/>
        <dbReference type="ChEBI" id="CHEBI:17544"/>
        <dbReference type="ChEBI" id="CHEBI:29985"/>
        <dbReference type="ChEBI" id="CHEBI:30616"/>
        <dbReference type="ChEBI" id="CHEBI:43474"/>
        <dbReference type="ChEBI" id="CHEBI:58228"/>
        <dbReference type="ChEBI" id="CHEBI:58359"/>
        <dbReference type="ChEBI" id="CHEBI:456216"/>
        <dbReference type="EC" id="6.3.5.5"/>
    </reaction>
</comment>
<comment type="catalytic activity">
    <molecule>Carbamoyl phosphate synthase large chain</molecule>
    <reaction evidence="1">
        <text>hydrogencarbonate + NH4(+) + 2 ATP = carbamoyl phosphate + 2 ADP + phosphate + 2 H(+)</text>
        <dbReference type="Rhea" id="RHEA:18029"/>
        <dbReference type="ChEBI" id="CHEBI:15378"/>
        <dbReference type="ChEBI" id="CHEBI:17544"/>
        <dbReference type="ChEBI" id="CHEBI:28938"/>
        <dbReference type="ChEBI" id="CHEBI:30616"/>
        <dbReference type="ChEBI" id="CHEBI:43474"/>
        <dbReference type="ChEBI" id="CHEBI:58228"/>
        <dbReference type="ChEBI" id="CHEBI:456216"/>
        <dbReference type="EC" id="6.3.4.16"/>
    </reaction>
</comment>
<comment type="cofactor">
    <cofactor evidence="1">
        <name>Mg(2+)</name>
        <dbReference type="ChEBI" id="CHEBI:18420"/>
    </cofactor>
    <cofactor evidence="1">
        <name>Mn(2+)</name>
        <dbReference type="ChEBI" id="CHEBI:29035"/>
    </cofactor>
    <text evidence="1">Binds 4 Mg(2+) or Mn(2+) ions per subunit.</text>
</comment>
<comment type="pathway">
    <text evidence="1">Amino-acid biosynthesis; L-arginine biosynthesis; carbamoyl phosphate from bicarbonate: step 1/1.</text>
</comment>
<comment type="pathway">
    <text evidence="1">Pyrimidine metabolism; UMP biosynthesis via de novo pathway; (S)-dihydroorotate from bicarbonate: step 1/3.</text>
</comment>
<comment type="subunit">
    <text evidence="1">Composed of two chains; the small (or glutamine) chain promotes the hydrolysis of glutamine to ammonia, which is used by the large (or ammonia) chain to synthesize carbamoyl phosphate. Tetramer of heterodimers (alpha,beta)4.</text>
</comment>
<comment type="domain">
    <text evidence="1">The large subunit is composed of 2 ATP-grasp domains that are involved in binding the 2 ATP molecules needed for carbamoyl phosphate synthesis. The N-terminal ATP-grasp domain (referred to as the carboxyphosphate synthetic component) catalyzes the ATP-dependent phosphorylation of hydrogencarbonate to carboxyphosphate and the subsequent nucleophilic attack by ammonia to form a carbamate intermediate. The C-terminal ATP-grasp domain (referred to as the carbamoyl phosphate synthetic component) then catalyzes the phosphorylation of carbamate with the second ATP to form the end product carbamoyl phosphate. The reactive and unstable enzyme intermediates are sequentially channeled from one active site to the next through the interior of the protein over a distance of at least 96 A.</text>
</comment>
<comment type="similarity">
    <text evidence="1">Belongs to the CarB family.</text>
</comment>
<keyword id="KW-0028">Amino-acid biosynthesis</keyword>
<keyword id="KW-0055">Arginine biosynthesis</keyword>
<keyword id="KW-0067">ATP-binding</keyword>
<keyword id="KW-0436">Ligase</keyword>
<keyword id="KW-0460">Magnesium</keyword>
<keyword id="KW-0464">Manganese</keyword>
<keyword id="KW-0479">Metal-binding</keyword>
<keyword id="KW-0547">Nucleotide-binding</keyword>
<keyword id="KW-0665">Pyrimidine biosynthesis</keyword>
<keyword id="KW-0677">Repeat</keyword>
<feature type="chain" id="PRO_0000145042" description="Carbamoyl phosphate synthase large chain">
    <location>
        <begin position="1"/>
        <end position="1057"/>
    </location>
</feature>
<feature type="domain" description="ATP-grasp 1" evidence="1">
    <location>
        <begin position="133"/>
        <end position="327"/>
    </location>
</feature>
<feature type="domain" description="ATP-grasp 2" evidence="1">
    <location>
        <begin position="671"/>
        <end position="861"/>
    </location>
</feature>
<feature type="domain" description="MGS-like" evidence="1">
    <location>
        <begin position="930"/>
        <end position="1057"/>
    </location>
</feature>
<feature type="region of interest" description="Carboxyphosphate synthetic domain" evidence="1">
    <location>
        <begin position="1"/>
        <end position="401"/>
    </location>
</feature>
<feature type="region of interest" description="Oligomerization domain" evidence="1">
    <location>
        <begin position="402"/>
        <end position="546"/>
    </location>
</feature>
<feature type="region of interest" description="Carbamoyl phosphate synthetic domain" evidence="1">
    <location>
        <begin position="547"/>
        <end position="929"/>
    </location>
</feature>
<feature type="region of interest" description="Allosteric domain" evidence="1">
    <location>
        <begin position="930"/>
        <end position="1057"/>
    </location>
</feature>
<feature type="binding site" evidence="1">
    <location>
        <position position="129"/>
    </location>
    <ligand>
        <name>ATP</name>
        <dbReference type="ChEBI" id="CHEBI:30616"/>
        <label>1</label>
    </ligand>
</feature>
<feature type="binding site" evidence="1">
    <location>
        <position position="169"/>
    </location>
    <ligand>
        <name>ATP</name>
        <dbReference type="ChEBI" id="CHEBI:30616"/>
        <label>1</label>
    </ligand>
</feature>
<feature type="binding site" evidence="1">
    <location>
        <position position="175"/>
    </location>
    <ligand>
        <name>ATP</name>
        <dbReference type="ChEBI" id="CHEBI:30616"/>
        <label>1</label>
    </ligand>
</feature>
<feature type="binding site" evidence="1">
    <location>
        <position position="176"/>
    </location>
    <ligand>
        <name>ATP</name>
        <dbReference type="ChEBI" id="CHEBI:30616"/>
        <label>1</label>
    </ligand>
</feature>
<feature type="binding site" evidence="1">
    <location>
        <position position="208"/>
    </location>
    <ligand>
        <name>ATP</name>
        <dbReference type="ChEBI" id="CHEBI:30616"/>
        <label>1</label>
    </ligand>
</feature>
<feature type="binding site" evidence="1">
    <location>
        <position position="210"/>
    </location>
    <ligand>
        <name>ATP</name>
        <dbReference type="ChEBI" id="CHEBI:30616"/>
        <label>1</label>
    </ligand>
</feature>
<feature type="binding site" evidence="1">
    <location>
        <position position="215"/>
    </location>
    <ligand>
        <name>ATP</name>
        <dbReference type="ChEBI" id="CHEBI:30616"/>
        <label>1</label>
    </ligand>
</feature>
<feature type="binding site" evidence="1">
    <location>
        <position position="241"/>
    </location>
    <ligand>
        <name>ATP</name>
        <dbReference type="ChEBI" id="CHEBI:30616"/>
        <label>1</label>
    </ligand>
</feature>
<feature type="binding site" evidence="1">
    <location>
        <position position="242"/>
    </location>
    <ligand>
        <name>ATP</name>
        <dbReference type="ChEBI" id="CHEBI:30616"/>
        <label>1</label>
    </ligand>
</feature>
<feature type="binding site" evidence="1">
    <location>
        <position position="243"/>
    </location>
    <ligand>
        <name>ATP</name>
        <dbReference type="ChEBI" id="CHEBI:30616"/>
        <label>1</label>
    </ligand>
</feature>
<feature type="binding site" evidence="1">
    <location>
        <position position="284"/>
    </location>
    <ligand>
        <name>ATP</name>
        <dbReference type="ChEBI" id="CHEBI:30616"/>
        <label>1</label>
    </ligand>
</feature>
<feature type="binding site" evidence="1">
    <location>
        <position position="284"/>
    </location>
    <ligand>
        <name>Mg(2+)</name>
        <dbReference type="ChEBI" id="CHEBI:18420"/>
        <label>1</label>
    </ligand>
</feature>
<feature type="binding site" evidence="1">
    <location>
        <position position="284"/>
    </location>
    <ligand>
        <name>Mn(2+)</name>
        <dbReference type="ChEBI" id="CHEBI:29035"/>
        <label>1</label>
    </ligand>
</feature>
<feature type="binding site" evidence="1">
    <location>
        <position position="298"/>
    </location>
    <ligand>
        <name>ATP</name>
        <dbReference type="ChEBI" id="CHEBI:30616"/>
        <label>1</label>
    </ligand>
</feature>
<feature type="binding site" evidence="1">
    <location>
        <position position="298"/>
    </location>
    <ligand>
        <name>Mg(2+)</name>
        <dbReference type="ChEBI" id="CHEBI:18420"/>
        <label>1</label>
    </ligand>
</feature>
<feature type="binding site" evidence="1">
    <location>
        <position position="298"/>
    </location>
    <ligand>
        <name>Mg(2+)</name>
        <dbReference type="ChEBI" id="CHEBI:18420"/>
        <label>2</label>
    </ligand>
</feature>
<feature type="binding site" evidence="1">
    <location>
        <position position="298"/>
    </location>
    <ligand>
        <name>Mn(2+)</name>
        <dbReference type="ChEBI" id="CHEBI:29035"/>
        <label>1</label>
    </ligand>
</feature>
<feature type="binding site" evidence="1">
    <location>
        <position position="298"/>
    </location>
    <ligand>
        <name>Mn(2+)</name>
        <dbReference type="ChEBI" id="CHEBI:29035"/>
        <label>2</label>
    </ligand>
</feature>
<feature type="binding site" evidence="1">
    <location>
        <position position="300"/>
    </location>
    <ligand>
        <name>Mg(2+)</name>
        <dbReference type="ChEBI" id="CHEBI:18420"/>
        <label>2</label>
    </ligand>
</feature>
<feature type="binding site" evidence="1">
    <location>
        <position position="300"/>
    </location>
    <ligand>
        <name>Mn(2+)</name>
        <dbReference type="ChEBI" id="CHEBI:29035"/>
        <label>2</label>
    </ligand>
</feature>
<feature type="binding site" evidence="1">
    <location>
        <position position="707"/>
    </location>
    <ligand>
        <name>ATP</name>
        <dbReference type="ChEBI" id="CHEBI:30616"/>
        <label>2</label>
    </ligand>
</feature>
<feature type="binding site" evidence="1">
    <location>
        <position position="746"/>
    </location>
    <ligand>
        <name>ATP</name>
        <dbReference type="ChEBI" id="CHEBI:30616"/>
        <label>2</label>
    </ligand>
</feature>
<feature type="binding site" evidence="1">
    <location>
        <position position="748"/>
    </location>
    <ligand>
        <name>ATP</name>
        <dbReference type="ChEBI" id="CHEBI:30616"/>
        <label>2</label>
    </ligand>
</feature>
<feature type="binding site" evidence="1">
    <location>
        <position position="752"/>
    </location>
    <ligand>
        <name>ATP</name>
        <dbReference type="ChEBI" id="CHEBI:30616"/>
        <label>2</label>
    </ligand>
</feature>
<feature type="binding site" evidence="1">
    <location>
        <position position="777"/>
    </location>
    <ligand>
        <name>ATP</name>
        <dbReference type="ChEBI" id="CHEBI:30616"/>
        <label>2</label>
    </ligand>
</feature>
<feature type="binding site" evidence="1">
    <location>
        <position position="778"/>
    </location>
    <ligand>
        <name>ATP</name>
        <dbReference type="ChEBI" id="CHEBI:30616"/>
        <label>2</label>
    </ligand>
</feature>
<feature type="binding site" evidence="1">
    <location>
        <position position="779"/>
    </location>
    <ligand>
        <name>ATP</name>
        <dbReference type="ChEBI" id="CHEBI:30616"/>
        <label>2</label>
    </ligand>
</feature>
<feature type="binding site" evidence="1">
    <location>
        <position position="780"/>
    </location>
    <ligand>
        <name>ATP</name>
        <dbReference type="ChEBI" id="CHEBI:30616"/>
        <label>2</label>
    </ligand>
</feature>
<feature type="binding site" evidence="1">
    <location>
        <position position="820"/>
    </location>
    <ligand>
        <name>ATP</name>
        <dbReference type="ChEBI" id="CHEBI:30616"/>
        <label>2</label>
    </ligand>
</feature>
<feature type="binding site" evidence="1">
    <location>
        <position position="820"/>
    </location>
    <ligand>
        <name>Mg(2+)</name>
        <dbReference type="ChEBI" id="CHEBI:18420"/>
        <label>3</label>
    </ligand>
</feature>
<feature type="binding site" evidence="1">
    <location>
        <position position="820"/>
    </location>
    <ligand>
        <name>Mn(2+)</name>
        <dbReference type="ChEBI" id="CHEBI:29035"/>
        <label>3</label>
    </ligand>
</feature>
<feature type="binding site" evidence="1">
    <location>
        <position position="832"/>
    </location>
    <ligand>
        <name>ATP</name>
        <dbReference type="ChEBI" id="CHEBI:30616"/>
        <label>2</label>
    </ligand>
</feature>
<feature type="binding site" evidence="1">
    <location>
        <position position="832"/>
    </location>
    <ligand>
        <name>Mg(2+)</name>
        <dbReference type="ChEBI" id="CHEBI:18420"/>
        <label>3</label>
    </ligand>
</feature>
<feature type="binding site" evidence="1">
    <location>
        <position position="832"/>
    </location>
    <ligand>
        <name>Mg(2+)</name>
        <dbReference type="ChEBI" id="CHEBI:18420"/>
        <label>4</label>
    </ligand>
</feature>
<feature type="binding site" evidence="1">
    <location>
        <position position="832"/>
    </location>
    <ligand>
        <name>Mn(2+)</name>
        <dbReference type="ChEBI" id="CHEBI:29035"/>
        <label>3</label>
    </ligand>
</feature>
<feature type="binding site" evidence="1">
    <location>
        <position position="832"/>
    </location>
    <ligand>
        <name>Mn(2+)</name>
        <dbReference type="ChEBI" id="CHEBI:29035"/>
        <label>4</label>
    </ligand>
</feature>
<feature type="binding site" evidence="1">
    <location>
        <position position="834"/>
    </location>
    <ligand>
        <name>Mg(2+)</name>
        <dbReference type="ChEBI" id="CHEBI:18420"/>
        <label>4</label>
    </ligand>
</feature>
<feature type="binding site" evidence="1">
    <location>
        <position position="834"/>
    </location>
    <ligand>
        <name>Mn(2+)</name>
        <dbReference type="ChEBI" id="CHEBI:29035"/>
        <label>4</label>
    </ligand>
</feature>
<gene>
    <name evidence="1" type="primary">carB</name>
    <name type="synonym">pyrAB</name>
    <name type="ordered locus">MW1086</name>
</gene>
<organism>
    <name type="scientific">Staphylococcus aureus (strain MW2)</name>
    <dbReference type="NCBI Taxonomy" id="196620"/>
    <lineage>
        <taxon>Bacteria</taxon>
        <taxon>Bacillati</taxon>
        <taxon>Bacillota</taxon>
        <taxon>Bacilli</taxon>
        <taxon>Bacillales</taxon>
        <taxon>Staphylococcaceae</taxon>
        <taxon>Staphylococcus</taxon>
    </lineage>
</organism>
<protein>
    <recommendedName>
        <fullName evidence="1">Carbamoyl phosphate synthase large chain</fullName>
        <ecNumber evidence="1">6.3.4.16</ecNumber>
        <ecNumber evidence="1">6.3.5.5</ecNumber>
    </recommendedName>
    <alternativeName>
        <fullName evidence="1">Carbamoyl phosphate synthetase ammonia chain</fullName>
    </alternativeName>
</protein>
<dbReference type="EC" id="6.3.4.16" evidence="1"/>
<dbReference type="EC" id="6.3.5.5" evidence="1"/>
<dbReference type="EMBL" id="BA000033">
    <property type="protein sequence ID" value="BAB94951.1"/>
    <property type="molecule type" value="Genomic_DNA"/>
</dbReference>
<dbReference type="RefSeq" id="WP_001126261.1">
    <property type="nucleotide sequence ID" value="NC_003923.1"/>
</dbReference>
<dbReference type="SMR" id="P58940"/>
<dbReference type="KEGG" id="sam:MW1086"/>
<dbReference type="HOGENOM" id="CLU_000513_1_2_9"/>
<dbReference type="UniPathway" id="UPA00068">
    <property type="reaction ID" value="UER00171"/>
</dbReference>
<dbReference type="UniPathway" id="UPA00070">
    <property type="reaction ID" value="UER00115"/>
</dbReference>
<dbReference type="GO" id="GO:0005737">
    <property type="term" value="C:cytoplasm"/>
    <property type="evidence" value="ECO:0007669"/>
    <property type="project" value="TreeGrafter"/>
</dbReference>
<dbReference type="GO" id="GO:0005524">
    <property type="term" value="F:ATP binding"/>
    <property type="evidence" value="ECO:0007669"/>
    <property type="project" value="UniProtKB-UniRule"/>
</dbReference>
<dbReference type="GO" id="GO:0004087">
    <property type="term" value="F:carbamoyl-phosphate synthase (ammonia) activity"/>
    <property type="evidence" value="ECO:0007669"/>
    <property type="project" value="RHEA"/>
</dbReference>
<dbReference type="GO" id="GO:0004088">
    <property type="term" value="F:carbamoyl-phosphate synthase (glutamine-hydrolyzing) activity"/>
    <property type="evidence" value="ECO:0007669"/>
    <property type="project" value="UniProtKB-UniRule"/>
</dbReference>
<dbReference type="GO" id="GO:0046872">
    <property type="term" value="F:metal ion binding"/>
    <property type="evidence" value="ECO:0007669"/>
    <property type="project" value="UniProtKB-KW"/>
</dbReference>
<dbReference type="GO" id="GO:0044205">
    <property type="term" value="P:'de novo' UMP biosynthetic process"/>
    <property type="evidence" value="ECO:0007669"/>
    <property type="project" value="UniProtKB-UniRule"/>
</dbReference>
<dbReference type="GO" id="GO:0006541">
    <property type="term" value="P:glutamine metabolic process"/>
    <property type="evidence" value="ECO:0007669"/>
    <property type="project" value="TreeGrafter"/>
</dbReference>
<dbReference type="GO" id="GO:0006526">
    <property type="term" value="P:L-arginine biosynthetic process"/>
    <property type="evidence" value="ECO:0007669"/>
    <property type="project" value="UniProtKB-UniRule"/>
</dbReference>
<dbReference type="CDD" id="cd01424">
    <property type="entry name" value="MGS_CPS_II"/>
    <property type="match status" value="1"/>
</dbReference>
<dbReference type="FunFam" id="1.10.1030.10:FF:000002">
    <property type="entry name" value="Carbamoyl-phosphate synthase large chain"/>
    <property type="match status" value="1"/>
</dbReference>
<dbReference type="FunFam" id="3.30.1490.20:FF:000001">
    <property type="entry name" value="Carbamoyl-phosphate synthase large chain"/>
    <property type="match status" value="1"/>
</dbReference>
<dbReference type="FunFam" id="3.30.470.20:FF:000001">
    <property type="entry name" value="Carbamoyl-phosphate synthase large chain"/>
    <property type="match status" value="1"/>
</dbReference>
<dbReference type="FunFam" id="3.30.470.20:FF:000026">
    <property type="entry name" value="Carbamoyl-phosphate synthase large chain"/>
    <property type="match status" value="1"/>
</dbReference>
<dbReference type="FunFam" id="3.40.50.1380:FF:000011">
    <property type="entry name" value="Carbamoyl-phosphate synthase large chain"/>
    <property type="match status" value="1"/>
</dbReference>
<dbReference type="FunFam" id="3.40.50.20:FF:000001">
    <property type="entry name" value="Carbamoyl-phosphate synthase large chain"/>
    <property type="match status" value="2"/>
</dbReference>
<dbReference type="Gene3D" id="3.40.50.20">
    <property type="match status" value="2"/>
</dbReference>
<dbReference type="Gene3D" id="3.30.1490.20">
    <property type="entry name" value="ATP-grasp fold, A domain"/>
    <property type="match status" value="1"/>
</dbReference>
<dbReference type="Gene3D" id="3.30.470.20">
    <property type="entry name" value="ATP-grasp fold, B domain"/>
    <property type="match status" value="2"/>
</dbReference>
<dbReference type="Gene3D" id="1.10.1030.10">
    <property type="entry name" value="Carbamoyl-phosphate synthetase, large subunit oligomerisation domain"/>
    <property type="match status" value="1"/>
</dbReference>
<dbReference type="Gene3D" id="3.40.50.1380">
    <property type="entry name" value="Methylglyoxal synthase-like domain"/>
    <property type="match status" value="1"/>
</dbReference>
<dbReference type="HAMAP" id="MF_01210_A">
    <property type="entry name" value="CPSase_L_chain_A"/>
    <property type="match status" value="1"/>
</dbReference>
<dbReference type="HAMAP" id="MF_01210_B">
    <property type="entry name" value="CPSase_L_chain_B"/>
    <property type="match status" value="1"/>
</dbReference>
<dbReference type="InterPro" id="IPR011761">
    <property type="entry name" value="ATP-grasp"/>
</dbReference>
<dbReference type="InterPro" id="IPR013815">
    <property type="entry name" value="ATP_grasp_subdomain_1"/>
</dbReference>
<dbReference type="InterPro" id="IPR006275">
    <property type="entry name" value="CarbamoylP_synth_lsu"/>
</dbReference>
<dbReference type="InterPro" id="IPR005480">
    <property type="entry name" value="CarbamoylP_synth_lsu_oligo"/>
</dbReference>
<dbReference type="InterPro" id="IPR036897">
    <property type="entry name" value="CarbamoylP_synth_lsu_oligo_sf"/>
</dbReference>
<dbReference type="InterPro" id="IPR005479">
    <property type="entry name" value="CbamoylP_synth_lsu-like_ATP-bd"/>
</dbReference>
<dbReference type="InterPro" id="IPR005483">
    <property type="entry name" value="CbamoylP_synth_lsu_CPSase_dom"/>
</dbReference>
<dbReference type="InterPro" id="IPR011607">
    <property type="entry name" value="MGS-like_dom"/>
</dbReference>
<dbReference type="InterPro" id="IPR036914">
    <property type="entry name" value="MGS-like_dom_sf"/>
</dbReference>
<dbReference type="InterPro" id="IPR033937">
    <property type="entry name" value="MGS_CPS_CarB"/>
</dbReference>
<dbReference type="InterPro" id="IPR016185">
    <property type="entry name" value="PreATP-grasp_dom_sf"/>
</dbReference>
<dbReference type="NCBIfam" id="TIGR01369">
    <property type="entry name" value="CPSaseII_lrg"/>
    <property type="match status" value="1"/>
</dbReference>
<dbReference type="NCBIfam" id="NF003671">
    <property type="entry name" value="PRK05294.1"/>
    <property type="match status" value="1"/>
</dbReference>
<dbReference type="NCBIfam" id="NF009455">
    <property type="entry name" value="PRK12815.1"/>
    <property type="match status" value="1"/>
</dbReference>
<dbReference type="PANTHER" id="PTHR11405:SF53">
    <property type="entry name" value="CARBAMOYL-PHOSPHATE SYNTHASE [AMMONIA], MITOCHONDRIAL"/>
    <property type="match status" value="1"/>
</dbReference>
<dbReference type="PANTHER" id="PTHR11405">
    <property type="entry name" value="CARBAMOYLTRANSFERASE FAMILY MEMBER"/>
    <property type="match status" value="1"/>
</dbReference>
<dbReference type="Pfam" id="PF02786">
    <property type="entry name" value="CPSase_L_D2"/>
    <property type="match status" value="2"/>
</dbReference>
<dbReference type="Pfam" id="PF02787">
    <property type="entry name" value="CPSase_L_D3"/>
    <property type="match status" value="1"/>
</dbReference>
<dbReference type="Pfam" id="PF02142">
    <property type="entry name" value="MGS"/>
    <property type="match status" value="1"/>
</dbReference>
<dbReference type="PRINTS" id="PR00098">
    <property type="entry name" value="CPSASE"/>
</dbReference>
<dbReference type="SMART" id="SM01096">
    <property type="entry name" value="CPSase_L_D3"/>
    <property type="match status" value="1"/>
</dbReference>
<dbReference type="SMART" id="SM01209">
    <property type="entry name" value="GARS_A"/>
    <property type="match status" value="1"/>
</dbReference>
<dbReference type="SMART" id="SM00851">
    <property type="entry name" value="MGS"/>
    <property type="match status" value="1"/>
</dbReference>
<dbReference type="SUPFAM" id="SSF48108">
    <property type="entry name" value="Carbamoyl phosphate synthetase, large subunit connection domain"/>
    <property type="match status" value="1"/>
</dbReference>
<dbReference type="SUPFAM" id="SSF56059">
    <property type="entry name" value="Glutathione synthetase ATP-binding domain-like"/>
    <property type="match status" value="2"/>
</dbReference>
<dbReference type="SUPFAM" id="SSF52335">
    <property type="entry name" value="Methylglyoxal synthase-like"/>
    <property type="match status" value="1"/>
</dbReference>
<dbReference type="SUPFAM" id="SSF52440">
    <property type="entry name" value="PreATP-grasp domain"/>
    <property type="match status" value="2"/>
</dbReference>
<dbReference type="PROSITE" id="PS50975">
    <property type="entry name" value="ATP_GRASP"/>
    <property type="match status" value="2"/>
</dbReference>
<dbReference type="PROSITE" id="PS00866">
    <property type="entry name" value="CPSASE_1"/>
    <property type="match status" value="2"/>
</dbReference>
<dbReference type="PROSITE" id="PS00867">
    <property type="entry name" value="CPSASE_2"/>
    <property type="match status" value="2"/>
</dbReference>
<dbReference type="PROSITE" id="PS51855">
    <property type="entry name" value="MGS"/>
    <property type="match status" value="1"/>
</dbReference>
<accession>P58940</accession>
<proteinExistence type="inferred from homology"/>
<sequence>MPKRNDIKTILVIGSGPIIIGQAAEFDYAGTQACLALKEEGYRVILVNSNPATIMTDKEIADKVYIEPLTHDFIARIIRKEQPDALLPTLGGQTGLNMAIQLHESGVLQDNNVQLLGTELTSIQQAEDREMFRTLMNDLNVPVPESDIVNTVEQAFKFKEQVGYPLIVRPAFTMGGTGGGICHNDEELHEIVSNGLHYSPATQCLLEKSIAGFKEIEYEVMRDKNDNAIVVCNMENIDPVGIHTGDSIVVAPSQTLSDVEYQMLRDVSLKVIRALGIEGGCNVQLALDPHSFDYYIIEVNPRVSRSSALASKATGYPIAKLAAKIAVGLTLDEMLNPITGTSYAAFEPTLDYVISKIPRFPFDKFEKGERELGTQMKATGEVMAIGRTYEESLLKAIRSLEYGVHHLGLPNGESFDLDYIKERISHQDDERLFFIGEAIRRGTTLEEIHNMTQIDYFFLHKFQNIIDIEHQLKEHQGDLEYLKYAKDYGFSDKTIAHRFNMTEEEVYQLRMENDIKPVYKMVDTCAAEFESSTPYYYGTYETENESIVTDKEKILVLGSGPIRIGQGVEFDYATVHAVWAIQKAGYEAIIVNNNPETVSTDFSISDKLYFEPLTEEDVMNIINLEKPKGVVVQFGGQTAINLADKLAKHGVKILGTSLENLNRAEDRKEFEALLRKINVPQPQGKTATSPEEALANAAEIGYPVVVRPSYVLGGRAMEIVDNDKELENYMTQAVKASPEHPVLVDRYLTGKEIEVDAICDGETVIIPGIMEHIERAGVHSGDSIAVYPPQTLTEDELATLEDYTIKLAKGINIIGLINIQFVIAHDGVYVLEVNPRSSRTVPFLSKITDIPMAQLAMRAIIGEKLTDMGYQEGVQPYAEGVFVKAPVFSFNKLKNVDITLGPEMKSTGEVMGKDTTLEKALFKGLTGSGVEVKDHGTVLMTVSDKDKEEVVKLAQRLNEVGYKILATSGTANKLAEYDIPAEVVGKIGGENDLLTRIQNGDVQIVINTMTKGKEVERDGFQIRRTTVENGIPCLTSLDTANALTNVIESMTFTMRQM</sequence>
<name>CARB_STAAW</name>
<reference key="1">
    <citation type="journal article" date="2002" name="Lancet">
        <title>Genome and virulence determinants of high virulence community-acquired MRSA.</title>
        <authorList>
            <person name="Baba T."/>
            <person name="Takeuchi F."/>
            <person name="Kuroda M."/>
            <person name="Yuzawa H."/>
            <person name="Aoki K."/>
            <person name="Oguchi A."/>
            <person name="Nagai Y."/>
            <person name="Iwama N."/>
            <person name="Asano K."/>
            <person name="Naimi T."/>
            <person name="Kuroda H."/>
            <person name="Cui L."/>
            <person name="Yamamoto K."/>
            <person name="Hiramatsu K."/>
        </authorList>
    </citation>
    <scope>NUCLEOTIDE SEQUENCE [LARGE SCALE GENOMIC DNA]</scope>
    <source>
        <strain>MW2</strain>
    </source>
</reference>